<dbReference type="EC" id="3.1.-.-" evidence="1"/>
<dbReference type="EMBL" id="CP001107">
    <property type="protein sequence ID" value="ACR75500.1"/>
    <property type="molecule type" value="Genomic_DNA"/>
</dbReference>
<dbReference type="RefSeq" id="WP_012742598.1">
    <property type="nucleotide sequence ID" value="NC_012781.1"/>
</dbReference>
<dbReference type="SMR" id="C4ZA59"/>
<dbReference type="STRING" id="515619.EUBREC_1756"/>
<dbReference type="PaxDb" id="515619-EUBREC_1756"/>
<dbReference type="GeneID" id="86988554"/>
<dbReference type="KEGG" id="ere:EUBREC_1756"/>
<dbReference type="HOGENOM" id="CLU_106710_3_0_9"/>
<dbReference type="Proteomes" id="UP000001477">
    <property type="component" value="Chromosome"/>
</dbReference>
<dbReference type="GO" id="GO:0005737">
    <property type="term" value="C:cytoplasm"/>
    <property type="evidence" value="ECO:0007669"/>
    <property type="project" value="UniProtKB-SubCell"/>
</dbReference>
<dbReference type="GO" id="GO:0004222">
    <property type="term" value="F:metalloendopeptidase activity"/>
    <property type="evidence" value="ECO:0007669"/>
    <property type="project" value="InterPro"/>
</dbReference>
<dbReference type="GO" id="GO:0004521">
    <property type="term" value="F:RNA endonuclease activity"/>
    <property type="evidence" value="ECO:0007669"/>
    <property type="project" value="UniProtKB-UniRule"/>
</dbReference>
<dbReference type="GO" id="GO:0008270">
    <property type="term" value="F:zinc ion binding"/>
    <property type="evidence" value="ECO:0007669"/>
    <property type="project" value="UniProtKB-UniRule"/>
</dbReference>
<dbReference type="GO" id="GO:0006364">
    <property type="term" value="P:rRNA processing"/>
    <property type="evidence" value="ECO:0007669"/>
    <property type="project" value="UniProtKB-UniRule"/>
</dbReference>
<dbReference type="Gene3D" id="3.40.390.30">
    <property type="entry name" value="Metalloproteases ('zincins'), catalytic domain"/>
    <property type="match status" value="1"/>
</dbReference>
<dbReference type="HAMAP" id="MF_00009">
    <property type="entry name" value="Endoribonucl_YbeY"/>
    <property type="match status" value="1"/>
</dbReference>
<dbReference type="InterPro" id="IPR023091">
    <property type="entry name" value="MetalPrtase_cat_dom_sf_prd"/>
</dbReference>
<dbReference type="InterPro" id="IPR002036">
    <property type="entry name" value="YbeY"/>
</dbReference>
<dbReference type="InterPro" id="IPR020549">
    <property type="entry name" value="YbeY_CS"/>
</dbReference>
<dbReference type="NCBIfam" id="TIGR00043">
    <property type="entry name" value="rRNA maturation RNase YbeY"/>
    <property type="match status" value="1"/>
</dbReference>
<dbReference type="PANTHER" id="PTHR46986">
    <property type="entry name" value="ENDORIBONUCLEASE YBEY, CHLOROPLASTIC"/>
    <property type="match status" value="1"/>
</dbReference>
<dbReference type="PANTHER" id="PTHR46986:SF1">
    <property type="entry name" value="ENDORIBONUCLEASE YBEY, CHLOROPLASTIC"/>
    <property type="match status" value="1"/>
</dbReference>
<dbReference type="Pfam" id="PF02130">
    <property type="entry name" value="YbeY"/>
    <property type="match status" value="1"/>
</dbReference>
<dbReference type="SUPFAM" id="SSF55486">
    <property type="entry name" value="Metalloproteases ('zincins'), catalytic domain"/>
    <property type="match status" value="1"/>
</dbReference>
<dbReference type="PROSITE" id="PS01306">
    <property type="entry name" value="UPF0054"/>
    <property type="match status" value="1"/>
</dbReference>
<feature type="chain" id="PRO_1000201735" description="Endoribonuclease YbeY">
    <location>
        <begin position="1"/>
        <end position="165"/>
    </location>
</feature>
<feature type="binding site" evidence="1">
    <location>
        <position position="131"/>
    </location>
    <ligand>
        <name>Zn(2+)</name>
        <dbReference type="ChEBI" id="CHEBI:29105"/>
        <note>catalytic</note>
    </ligand>
</feature>
<feature type="binding site" evidence="1">
    <location>
        <position position="135"/>
    </location>
    <ligand>
        <name>Zn(2+)</name>
        <dbReference type="ChEBI" id="CHEBI:29105"/>
        <note>catalytic</note>
    </ligand>
</feature>
<feature type="binding site" evidence="1">
    <location>
        <position position="141"/>
    </location>
    <ligand>
        <name>Zn(2+)</name>
        <dbReference type="ChEBI" id="CHEBI:29105"/>
        <note>catalytic</note>
    </ligand>
</feature>
<protein>
    <recommendedName>
        <fullName evidence="1">Endoribonuclease YbeY</fullName>
        <ecNumber evidence="1">3.1.-.-</ecNumber>
    </recommendedName>
</protein>
<evidence type="ECO:0000255" key="1">
    <source>
        <dbReference type="HAMAP-Rule" id="MF_00009"/>
    </source>
</evidence>
<reference key="1">
    <citation type="journal article" date="2009" name="Proc. Natl. Acad. Sci. U.S.A.">
        <title>Characterizing a model human gut microbiota composed of members of its two dominant bacterial phyla.</title>
        <authorList>
            <person name="Mahowald M.A."/>
            <person name="Rey F.E."/>
            <person name="Seedorf H."/>
            <person name="Turnbaugh P.J."/>
            <person name="Fulton R.S."/>
            <person name="Wollam A."/>
            <person name="Shah N."/>
            <person name="Wang C."/>
            <person name="Magrini V."/>
            <person name="Wilson R.K."/>
            <person name="Cantarel B.L."/>
            <person name="Coutinho P.M."/>
            <person name="Henrissat B."/>
            <person name="Crock L.W."/>
            <person name="Russell A."/>
            <person name="Verberkmoes N.C."/>
            <person name="Hettich R.L."/>
            <person name="Gordon J.I."/>
        </authorList>
    </citation>
    <scope>NUCLEOTIDE SEQUENCE [LARGE SCALE GENOMIC DNA]</scope>
    <source>
        <strain>ATCC 33656 / DSM 3377 / JCM 17463 / KCTC 5835 / LMG 30912 / VPI 0990</strain>
    </source>
</reference>
<sequence>MSFFIEKEVECNFNFDYEKVAEAVVSASLEHENFPYEAEVNLTLTDNEGIHAINKEYRQIDRPTDVLSFPMLSYETPGDFSFLSDENEDDFNPDTGEVMLGDIIISVDKVKEQAVEYGHSEKREFAFLITHSMLHLFGYDHMEADEAAVMEEHQRKILDALGITR</sequence>
<gene>
    <name evidence="1" type="primary">ybeY</name>
    <name type="ordered locus">EUBREC_1756</name>
</gene>
<organism>
    <name type="scientific">Agathobacter rectalis (strain ATCC 33656 / DSM 3377 / JCM 17463 / KCTC 5835 / VPI 0990)</name>
    <name type="common">Eubacterium rectale</name>
    <dbReference type="NCBI Taxonomy" id="515619"/>
    <lineage>
        <taxon>Bacteria</taxon>
        <taxon>Bacillati</taxon>
        <taxon>Bacillota</taxon>
        <taxon>Clostridia</taxon>
        <taxon>Lachnospirales</taxon>
        <taxon>Lachnospiraceae</taxon>
        <taxon>Agathobacter</taxon>
    </lineage>
</organism>
<accession>C4ZA59</accession>
<comment type="function">
    <text evidence="1">Single strand-specific metallo-endoribonuclease involved in late-stage 70S ribosome quality control and in maturation of the 3' terminus of the 16S rRNA.</text>
</comment>
<comment type="cofactor">
    <cofactor evidence="1">
        <name>Zn(2+)</name>
        <dbReference type="ChEBI" id="CHEBI:29105"/>
    </cofactor>
    <text evidence="1">Binds 1 zinc ion.</text>
</comment>
<comment type="subcellular location">
    <subcellularLocation>
        <location evidence="1">Cytoplasm</location>
    </subcellularLocation>
</comment>
<comment type="similarity">
    <text evidence="1">Belongs to the endoribonuclease YbeY family.</text>
</comment>
<proteinExistence type="inferred from homology"/>
<name>YBEY_AGARV</name>
<keyword id="KW-0963">Cytoplasm</keyword>
<keyword id="KW-0255">Endonuclease</keyword>
<keyword id="KW-0378">Hydrolase</keyword>
<keyword id="KW-0479">Metal-binding</keyword>
<keyword id="KW-0540">Nuclease</keyword>
<keyword id="KW-0690">Ribosome biogenesis</keyword>
<keyword id="KW-0698">rRNA processing</keyword>
<keyword id="KW-0862">Zinc</keyword>